<proteinExistence type="inferred from homology"/>
<gene>
    <name evidence="3" type="primary">NPIPA9</name>
</gene>
<sequence>MFCCLGYEWLSGGCKTWHSAWVINTLADHRHRGTDFGGSPWLLIITVFLRSYKFAISLCTSYLCVSFLKTIFPSQNGHDGSTDVQQRARRSNCRRQEGIKIVLEDIFTLWRQVETKVRAKIRKMKVTTKVNRHDKINGKRKTAKEHLRKLSMKEREHGEKERQVSEAEENGKLDMKEIHTYMEMFQRAQALRRRAEDYYRCKITPSARKPLCNRVRMAAVEHRHSSGLPYWPYLTAETLKNRMGHQPPPPTQQHSIIDNSLSLKTPSECVLYPLPPSADDNLKTPPECLLTPLPPSALPSADDNLKTPAECLLYPLPPSADDNLKTPPECLLTPLPPSAPPSADDNLKTPPECVCSLPFHPQRMIISRN</sequence>
<dbReference type="EMBL" id="AC126755">
    <property type="status" value="NOT_ANNOTATED_CDS"/>
    <property type="molecule type" value="Genomic_DNA"/>
</dbReference>
<dbReference type="EMBL" id="AC138969">
    <property type="status" value="NOT_ANNOTATED_CDS"/>
    <property type="molecule type" value="Genomic_DNA"/>
</dbReference>
<dbReference type="EMBL" id="AC244489">
    <property type="status" value="NOT_ANNOTATED_CDS"/>
    <property type="molecule type" value="Genomic_DNA"/>
</dbReference>
<dbReference type="CCDS" id="CCDS92118.1"/>
<dbReference type="RefSeq" id="NP_001388639.1">
    <property type="nucleotide sequence ID" value="NM_001401710.1"/>
</dbReference>
<dbReference type="RefSeq" id="NP_001391933.1">
    <property type="nucleotide sequence ID" value="NM_001405004.1"/>
</dbReference>
<dbReference type="SMR" id="A0A0B4J1W7"/>
<dbReference type="FunCoup" id="A0A0B4J1W7">
    <property type="interactions" value="13"/>
</dbReference>
<dbReference type="GlyGen" id="A0A0B4J1W7">
    <property type="glycosylation" value="1 site"/>
</dbReference>
<dbReference type="BioMuta" id="ENSG00000183889"/>
<dbReference type="MassIVE" id="A0A0B4J1W7"/>
<dbReference type="PaxDb" id="9606-ENSP00000370908"/>
<dbReference type="Antibodypedia" id="42888">
    <property type="antibodies" value="1 antibodies from 1 providers"/>
</dbReference>
<dbReference type="Ensembl" id="ENST00000427999.7">
    <property type="protein sequence ID" value="ENSP00000389275.2"/>
    <property type="gene ID" value="ENSG00000233024.7"/>
</dbReference>
<dbReference type="GeneID" id="105376752"/>
<dbReference type="MANE-Select" id="ENST00000427999.7">
    <property type="protein sequence ID" value="ENSP00000389275.2"/>
    <property type="RefSeq nucleotide sequence ID" value="NM_001405004.1"/>
    <property type="RefSeq protein sequence ID" value="NP_001391933.1"/>
</dbReference>
<dbReference type="AGR" id="HGNC:41984"/>
<dbReference type="GeneCards" id="NPIPA9"/>
<dbReference type="HGNC" id="HGNC:41984">
    <property type="gene designation" value="NPIPA9"/>
</dbReference>
<dbReference type="VEuPathDB" id="HostDB:ENSG00000183889"/>
<dbReference type="VEuPathDB" id="HostDB:ENSG00000233024"/>
<dbReference type="eggNOG" id="ENOG502R1NR">
    <property type="taxonomic scope" value="Eukaryota"/>
</dbReference>
<dbReference type="HOGENOM" id="CLU_059939_0_0_1"/>
<dbReference type="InParanoid" id="A0A0B4J1W7"/>
<dbReference type="OrthoDB" id="9536178at2759"/>
<dbReference type="PAN-GO" id="A0A0B4J1W7">
    <property type="GO annotations" value="1 GO annotation based on evolutionary models"/>
</dbReference>
<dbReference type="PRO" id="PR:A0A0B4J1W7"/>
<dbReference type="Proteomes" id="UP000005640">
    <property type="component" value="Chromosome 16"/>
</dbReference>
<dbReference type="RNAct" id="A0A0B4J1W7">
    <property type="molecule type" value="protein"/>
</dbReference>
<dbReference type="Bgee" id="ENSG00000183889">
    <property type="expression patterns" value="Expressed in right hemisphere of cerebellum and 97 other cell types or tissues"/>
</dbReference>
<dbReference type="ExpressionAtlas" id="A0A0B4J1W7">
    <property type="expression patterns" value="baseline and differential"/>
</dbReference>
<dbReference type="InterPro" id="IPR009443">
    <property type="entry name" value="NPIP"/>
</dbReference>
<dbReference type="InterPro" id="IPR054697">
    <property type="entry name" value="NPIP_N"/>
</dbReference>
<dbReference type="PANTHER" id="PTHR15438">
    <property type="entry name" value="NUCLEAR PORE COMPLEX INTERACTING PROTEIN"/>
    <property type="match status" value="1"/>
</dbReference>
<dbReference type="PANTHER" id="PTHR15438:SF5">
    <property type="entry name" value="NUCLEAR PORE COMPLEX-INTERACTING PROTEIN FAMILY MEMBER A2-RELATED"/>
    <property type="match status" value="1"/>
</dbReference>
<dbReference type="Pfam" id="PF06409">
    <property type="entry name" value="NPIP"/>
    <property type="match status" value="1"/>
</dbReference>
<reference key="1">
    <citation type="journal article" date="2004" name="Nature">
        <title>The sequence and analysis of duplication-rich human chromosome 16.</title>
        <authorList>
            <person name="Martin J."/>
            <person name="Han C."/>
            <person name="Gordon L.A."/>
            <person name="Terry A."/>
            <person name="Prabhakar S."/>
            <person name="She X."/>
            <person name="Xie G."/>
            <person name="Hellsten U."/>
            <person name="Chan Y.M."/>
            <person name="Altherr M."/>
            <person name="Couronne O."/>
            <person name="Aerts A."/>
            <person name="Bajorek E."/>
            <person name="Black S."/>
            <person name="Blumer H."/>
            <person name="Branscomb E."/>
            <person name="Brown N.C."/>
            <person name="Bruno W.J."/>
            <person name="Buckingham J.M."/>
            <person name="Callen D.F."/>
            <person name="Campbell C.S."/>
            <person name="Campbell M.L."/>
            <person name="Campbell E.W."/>
            <person name="Caoile C."/>
            <person name="Challacombe J.F."/>
            <person name="Chasteen L.A."/>
            <person name="Chertkov O."/>
            <person name="Chi H.C."/>
            <person name="Christensen M."/>
            <person name="Clark L.M."/>
            <person name="Cohn J.D."/>
            <person name="Denys M."/>
            <person name="Detter J.C."/>
            <person name="Dickson M."/>
            <person name="Dimitrijevic-Bussod M."/>
            <person name="Escobar J."/>
            <person name="Fawcett J.J."/>
            <person name="Flowers D."/>
            <person name="Fotopulos D."/>
            <person name="Glavina T."/>
            <person name="Gomez M."/>
            <person name="Gonzales E."/>
            <person name="Goodstein D."/>
            <person name="Goodwin L.A."/>
            <person name="Grady D.L."/>
            <person name="Grigoriev I."/>
            <person name="Groza M."/>
            <person name="Hammon N."/>
            <person name="Hawkins T."/>
            <person name="Haydu L."/>
            <person name="Hildebrand C.E."/>
            <person name="Huang W."/>
            <person name="Israni S."/>
            <person name="Jett J."/>
            <person name="Jewett P.B."/>
            <person name="Kadner K."/>
            <person name="Kimball H."/>
            <person name="Kobayashi A."/>
            <person name="Krawczyk M.-C."/>
            <person name="Leyba T."/>
            <person name="Longmire J.L."/>
            <person name="Lopez F."/>
            <person name="Lou Y."/>
            <person name="Lowry S."/>
            <person name="Ludeman T."/>
            <person name="Manohar C.F."/>
            <person name="Mark G.A."/>
            <person name="McMurray K.L."/>
            <person name="Meincke L.J."/>
            <person name="Morgan J."/>
            <person name="Moyzis R.K."/>
            <person name="Mundt M.O."/>
            <person name="Munk A.C."/>
            <person name="Nandkeshwar R.D."/>
            <person name="Pitluck S."/>
            <person name="Pollard M."/>
            <person name="Predki P."/>
            <person name="Parson-Quintana B."/>
            <person name="Ramirez L."/>
            <person name="Rash S."/>
            <person name="Retterer J."/>
            <person name="Ricke D.O."/>
            <person name="Robinson D.L."/>
            <person name="Rodriguez A."/>
            <person name="Salamov A."/>
            <person name="Saunders E.H."/>
            <person name="Scott D."/>
            <person name="Shough T."/>
            <person name="Stallings R.L."/>
            <person name="Stalvey M."/>
            <person name="Sutherland R.D."/>
            <person name="Tapia R."/>
            <person name="Tesmer J.G."/>
            <person name="Thayer N."/>
            <person name="Thompson L.S."/>
            <person name="Tice H."/>
            <person name="Torney D.C."/>
            <person name="Tran-Gyamfi M."/>
            <person name="Tsai M."/>
            <person name="Ulanovsky L.E."/>
            <person name="Ustaszewska A."/>
            <person name="Vo N."/>
            <person name="White P.S."/>
            <person name="Williams A.L."/>
            <person name="Wills P.L."/>
            <person name="Wu J.-R."/>
            <person name="Wu K."/>
            <person name="Yang J."/>
            <person name="DeJong P."/>
            <person name="Bruce D."/>
            <person name="Doggett N.A."/>
            <person name="Deaven L."/>
            <person name="Schmutz J."/>
            <person name="Grimwood J."/>
            <person name="Richardson P."/>
            <person name="Rokhsar D.S."/>
            <person name="Eichler E.E."/>
            <person name="Gilna P."/>
            <person name="Lucas S.M."/>
            <person name="Myers R.M."/>
            <person name="Rubin E.M."/>
            <person name="Pennacchio L.A."/>
        </authorList>
    </citation>
    <scope>NUCLEOTIDE SEQUENCE [LARGE SCALE GENOMIC DNA]</scope>
</reference>
<evidence type="ECO:0000256" key="1">
    <source>
        <dbReference type="SAM" id="MobiDB-lite"/>
    </source>
</evidence>
<evidence type="ECO:0000305" key="2"/>
<evidence type="ECO:0000312" key="3">
    <source>
        <dbReference type="HGNC" id="HGNC:41984"/>
    </source>
</evidence>
<keyword id="KW-1185">Reference proteome</keyword>
<organism>
    <name type="scientific">Homo sapiens</name>
    <name type="common">Human</name>
    <dbReference type="NCBI Taxonomy" id="9606"/>
    <lineage>
        <taxon>Eukaryota</taxon>
        <taxon>Metazoa</taxon>
        <taxon>Chordata</taxon>
        <taxon>Craniata</taxon>
        <taxon>Vertebrata</taxon>
        <taxon>Euteleostomi</taxon>
        <taxon>Mammalia</taxon>
        <taxon>Eutheria</taxon>
        <taxon>Euarchontoglires</taxon>
        <taxon>Primates</taxon>
        <taxon>Haplorrhini</taxon>
        <taxon>Catarrhini</taxon>
        <taxon>Hominidae</taxon>
        <taxon>Homo</taxon>
    </lineage>
</organism>
<name>NPIA9_HUMAN</name>
<feature type="chain" id="PRO_0000456448" description="Nuclear pore complex-interacting protein family member A9">
    <location>
        <begin position="1"/>
        <end position="369"/>
    </location>
</feature>
<feature type="region of interest" description="Disordered" evidence="1">
    <location>
        <begin position="151"/>
        <end position="170"/>
    </location>
</feature>
<comment type="similarity">
    <text evidence="2">Belongs to the NPIP family.</text>
</comment>
<accession>A0A0B4J1W7</accession>
<protein>
    <recommendedName>
        <fullName evidence="2">Nuclear pore complex-interacting protein family member A9</fullName>
    </recommendedName>
</protein>